<gene>
    <name type="primary">minD</name>
    <name type="ordered locus">Z1937</name>
    <name type="ordered locus">ECs1669</name>
</gene>
<protein>
    <recommendedName>
        <fullName>Septum site-determining protein MinD</fullName>
    </recommendedName>
    <alternativeName>
        <fullName>Cell division inhibitor MinD</fullName>
    </alternativeName>
</protein>
<keyword id="KW-0067">ATP-binding</keyword>
<keyword id="KW-0131">Cell cycle</keyword>
<keyword id="KW-0132">Cell division</keyword>
<keyword id="KW-0997">Cell inner membrane</keyword>
<keyword id="KW-1003">Cell membrane</keyword>
<keyword id="KW-0472">Membrane</keyword>
<keyword id="KW-0547">Nucleotide-binding</keyword>
<keyword id="KW-1185">Reference proteome</keyword>
<keyword id="KW-0717">Septation</keyword>
<reference key="1">
    <citation type="journal article" date="2001" name="Nature">
        <title>Genome sequence of enterohaemorrhagic Escherichia coli O157:H7.</title>
        <authorList>
            <person name="Perna N.T."/>
            <person name="Plunkett G. III"/>
            <person name="Burland V."/>
            <person name="Mau B."/>
            <person name="Glasner J.D."/>
            <person name="Rose D.J."/>
            <person name="Mayhew G.F."/>
            <person name="Evans P.S."/>
            <person name="Gregor J."/>
            <person name="Kirkpatrick H.A."/>
            <person name="Posfai G."/>
            <person name="Hackett J."/>
            <person name="Klink S."/>
            <person name="Boutin A."/>
            <person name="Shao Y."/>
            <person name="Miller L."/>
            <person name="Grotbeck E.J."/>
            <person name="Davis N.W."/>
            <person name="Lim A."/>
            <person name="Dimalanta E.T."/>
            <person name="Potamousis K."/>
            <person name="Apodaca J."/>
            <person name="Anantharaman T.S."/>
            <person name="Lin J."/>
            <person name="Yen G."/>
            <person name="Schwartz D.C."/>
            <person name="Welch R.A."/>
            <person name="Blattner F.R."/>
        </authorList>
    </citation>
    <scope>NUCLEOTIDE SEQUENCE [LARGE SCALE GENOMIC DNA]</scope>
    <source>
        <strain>O157:H7 / EDL933 / ATCC 700927 / EHEC</strain>
    </source>
</reference>
<reference key="2">
    <citation type="journal article" date="2001" name="DNA Res.">
        <title>Complete genome sequence of enterohemorrhagic Escherichia coli O157:H7 and genomic comparison with a laboratory strain K-12.</title>
        <authorList>
            <person name="Hayashi T."/>
            <person name="Makino K."/>
            <person name="Ohnishi M."/>
            <person name="Kurokawa K."/>
            <person name="Ishii K."/>
            <person name="Yokoyama K."/>
            <person name="Han C.-G."/>
            <person name="Ohtsubo E."/>
            <person name="Nakayama K."/>
            <person name="Murata T."/>
            <person name="Tanaka M."/>
            <person name="Tobe T."/>
            <person name="Iida T."/>
            <person name="Takami H."/>
            <person name="Honda T."/>
            <person name="Sasakawa C."/>
            <person name="Ogasawara N."/>
            <person name="Yasunaga T."/>
            <person name="Kuhara S."/>
            <person name="Shiba T."/>
            <person name="Hattori M."/>
            <person name="Shinagawa H."/>
        </authorList>
    </citation>
    <scope>NUCLEOTIDE SEQUENCE [LARGE SCALE GENOMIC DNA]</scope>
    <source>
        <strain>O157:H7 / Sakai / RIMD 0509952 / EHEC</strain>
    </source>
</reference>
<sequence>MARIIVVTSGKGGVGKTTSSAAIATGLAQKGKKTVVIDFDIGLRNLDLIMGCERRVVYDFVNVIQGDATLNQALIKDKRTENLYILPASQTRDKDALTREGVAKVLDDLKAMDFEFIVCDSPAGIETGALMALYFADEAIITTNPEVSSVRDSDRILGILASKSRRAENGEEPIKEHLLLTRYNPGRVSRGDMLSMEDVLEILRIKLVGVIPEDQSVLRASNQGEPVILDINADAGKAYADTVERLLGEERPFRFIEEEKKGFLKRLFGG</sequence>
<organism>
    <name type="scientific">Escherichia coli O157:H7</name>
    <dbReference type="NCBI Taxonomy" id="83334"/>
    <lineage>
        <taxon>Bacteria</taxon>
        <taxon>Pseudomonadati</taxon>
        <taxon>Pseudomonadota</taxon>
        <taxon>Gammaproteobacteria</taxon>
        <taxon>Enterobacterales</taxon>
        <taxon>Enterobacteriaceae</taxon>
        <taxon>Escherichia</taxon>
    </lineage>
</organism>
<dbReference type="EMBL" id="AE005174">
    <property type="protein sequence ID" value="AAG56026.1"/>
    <property type="molecule type" value="Genomic_DNA"/>
</dbReference>
<dbReference type="EMBL" id="BA000007">
    <property type="protein sequence ID" value="BAB35092.1"/>
    <property type="molecule type" value="Genomic_DNA"/>
</dbReference>
<dbReference type="PIR" id="E90837">
    <property type="entry name" value="E90837"/>
</dbReference>
<dbReference type="PIR" id="F85695">
    <property type="entry name" value="F85695"/>
</dbReference>
<dbReference type="RefSeq" id="NP_309696.1">
    <property type="nucleotide sequence ID" value="NC_002695.1"/>
</dbReference>
<dbReference type="RefSeq" id="WP_000101055.1">
    <property type="nucleotide sequence ID" value="NZ_VOAI01000042.1"/>
</dbReference>
<dbReference type="SMR" id="P0AEZ5"/>
<dbReference type="STRING" id="155864.Z1937"/>
<dbReference type="GeneID" id="913204"/>
<dbReference type="GeneID" id="93776259"/>
<dbReference type="KEGG" id="ece:Z1937"/>
<dbReference type="KEGG" id="ecs:ECs_1669"/>
<dbReference type="PATRIC" id="fig|386585.9.peg.1765"/>
<dbReference type="eggNOG" id="COG2894">
    <property type="taxonomic scope" value="Bacteria"/>
</dbReference>
<dbReference type="HOGENOM" id="CLU_037612_0_1_6"/>
<dbReference type="OMA" id="CESAKAY"/>
<dbReference type="Proteomes" id="UP000000558">
    <property type="component" value="Chromosome"/>
</dbReference>
<dbReference type="Proteomes" id="UP000002519">
    <property type="component" value="Chromosome"/>
</dbReference>
<dbReference type="GO" id="GO:0009898">
    <property type="term" value="C:cytoplasmic side of plasma membrane"/>
    <property type="evidence" value="ECO:0007669"/>
    <property type="project" value="TreeGrafter"/>
</dbReference>
<dbReference type="GO" id="GO:0005829">
    <property type="term" value="C:cytosol"/>
    <property type="evidence" value="ECO:0007669"/>
    <property type="project" value="TreeGrafter"/>
</dbReference>
<dbReference type="GO" id="GO:0005524">
    <property type="term" value="F:ATP binding"/>
    <property type="evidence" value="ECO:0007669"/>
    <property type="project" value="UniProtKB-KW"/>
</dbReference>
<dbReference type="GO" id="GO:0016887">
    <property type="term" value="F:ATP hydrolysis activity"/>
    <property type="evidence" value="ECO:0007669"/>
    <property type="project" value="InterPro"/>
</dbReference>
<dbReference type="GO" id="GO:0000917">
    <property type="term" value="P:division septum assembly"/>
    <property type="evidence" value="ECO:0007669"/>
    <property type="project" value="UniProtKB-KW"/>
</dbReference>
<dbReference type="GO" id="GO:0051782">
    <property type="term" value="P:negative regulation of cell division"/>
    <property type="evidence" value="ECO:0007669"/>
    <property type="project" value="TreeGrafter"/>
</dbReference>
<dbReference type="CDD" id="cd02036">
    <property type="entry name" value="MinD"/>
    <property type="match status" value="1"/>
</dbReference>
<dbReference type="FunFam" id="3.40.50.300:FF:000068">
    <property type="entry name" value="Site-determining protein"/>
    <property type="match status" value="1"/>
</dbReference>
<dbReference type="Gene3D" id="3.40.50.300">
    <property type="entry name" value="P-loop containing nucleotide triphosphate hydrolases"/>
    <property type="match status" value="1"/>
</dbReference>
<dbReference type="InterPro" id="IPR002586">
    <property type="entry name" value="CobQ/CobB/MinD/ParA_Nub-bd_dom"/>
</dbReference>
<dbReference type="InterPro" id="IPR010223">
    <property type="entry name" value="MinD"/>
</dbReference>
<dbReference type="InterPro" id="IPR025501">
    <property type="entry name" value="MinD_FleN"/>
</dbReference>
<dbReference type="InterPro" id="IPR027417">
    <property type="entry name" value="P-loop_NTPase"/>
</dbReference>
<dbReference type="InterPro" id="IPR050625">
    <property type="entry name" value="ParA/MinD_ATPase"/>
</dbReference>
<dbReference type="NCBIfam" id="TIGR01968">
    <property type="entry name" value="minD_bact"/>
    <property type="match status" value="1"/>
</dbReference>
<dbReference type="NCBIfam" id="NF008079">
    <property type="entry name" value="PRK10818.1"/>
    <property type="match status" value="1"/>
</dbReference>
<dbReference type="PANTHER" id="PTHR43384:SF6">
    <property type="entry name" value="SEPTUM SITE-DETERMINING PROTEIN MIND HOMOLOG, CHLOROPLASTIC"/>
    <property type="match status" value="1"/>
</dbReference>
<dbReference type="PANTHER" id="PTHR43384">
    <property type="entry name" value="SEPTUM SITE-DETERMINING PROTEIN MIND HOMOLOG, CHLOROPLASTIC-RELATED"/>
    <property type="match status" value="1"/>
</dbReference>
<dbReference type="Pfam" id="PF01656">
    <property type="entry name" value="CbiA"/>
    <property type="match status" value="1"/>
</dbReference>
<dbReference type="PIRSF" id="PIRSF003092">
    <property type="entry name" value="MinD"/>
    <property type="match status" value="1"/>
</dbReference>
<dbReference type="SUPFAM" id="SSF52540">
    <property type="entry name" value="P-loop containing nucleoside triphosphate hydrolases"/>
    <property type="match status" value="1"/>
</dbReference>
<accession>P0AEZ5</accession>
<accession>P18197</accession>
<name>MIND_ECO57</name>
<evidence type="ECO:0000250" key="1"/>
<evidence type="ECO:0000250" key="2">
    <source>
        <dbReference type="UniProtKB" id="Q72H90"/>
    </source>
</evidence>
<evidence type="ECO:0000305" key="3"/>
<comment type="function">
    <text evidence="1">ATPase required for the correct placement of the division site. Cell division inhibitors MinC and MinD act in concert to form an inhibitor capable of blocking formation of the polar Z ring septums. Rapidly oscillates between the poles of the cell to destabilize FtsZ filaments that have formed before they mature into polar Z rings (By similarity).</text>
</comment>
<comment type="subunit">
    <text evidence="1">Interacts with MinC and FtsZ.</text>
</comment>
<comment type="subcellular location">
    <subcellularLocation>
        <location evidence="1">Cell inner membrane</location>
        <topology evidence="1">Peripheral membrane protein</topology>
    </subcellularLocation>
</comment>
<comment type="similarity">
    <text evidence="3">Belongs to the ParA family. MinD subfamily.</text>
</comment>
<proteinExistence type="inferred from homology"/>
<feature type="initiator methionine" description="Removed" evidence="1">
    <location>
        <position position="1"/>
    </location>
</feature>
<feature type="chain" id="PRO_0000201969" description="Septum site-determining protein MinD">
    <location>
        <begin position="2"/>
        <end position="270"/>
    </location>
</feature>
<feature type="binding site" evidence="2">
    <location>
        <begin position="11"/>
        <end position="18"/>
    </location>
    <ligand>
        <name>ATP</name>
        <dbReference type="ChEBI" id="CHEBI:30616"/>
    </ligand>
</feature>